<proteinExistence type="inferred from homology"/>
<comment type="subcellular location">
    <subcellularLocation>
        <location evidence="4">Secreted</location>
    </subcellularLocation>
</comment>
<comment type="tissue specificity">
    <text evidence="4">Expressed by the venom gland.</text>
</comment>
<comment type="PTM">
    <text evidence="3">Contains 2 disulfide bonds.</text>
</comment>
<comment type="similarity">
    <text evidence="3">Belongs to the scoloptoxin-16 family.</text>
</comment>
<comment type="caution">
    <text evidence="4">All E.rubripes family members described in 'Undeheim et al., 2014' have not been imported into UniProtKB. Please, refer to this paper to access them.</text>
</comment>
<comment type="online information" name="National Center for Biotechnology Information (NCBI)">
    <link uri="https://www.ncbi.nlm.nih.gov/nuccore/GASI01000141"/>
</comment>
<dbReference type="GO" id="GO:0005576">
    <property type="term" value="C:extracellular region"/>
    <property type="evidence" value="ECO:0007669"/>
    <property type="project" value="UniProtKB-SubCell"/>
</dbReference>
<dbReference type="GO" id="GO:0090729">
    <property type="term" value="F:toxin activity"/>
    <property type="evidence" value="ECO:0007669"/>
    <property type="project" value="UniProtKB-KW"/>
</dbReference>
<sequence>MNTVSVVQFLAVGCAVFVLYGRGVFAAEGVKKAGQHKDAELCLGSDGLGHRLDEFWYNDDMCQRFLCFKDDEGIMYEQIANCPIAIAEGDCTLKPGRRATTQTVRPAVESPP</sequence>
<name>TXG5A_ETHRU</name>
<keyword id="KW-1015">Disulfide bond</keyword>
<keyword id="KW-0964">Secreted</keyword>
<keyword id="KW-0732">Signal</keyword>
<keyword id="KW-0800">Toxin</keyword>
<evidence type="ECO:0000255" key="1"/>
<evidence type="ECO:0000303" key="2">
    <source>
    </source>
</evidence>
<evidence type="ECO:0000305" key="3"/>
<evidence type="ECO:0000305" key="4">
    <source>
    </source>
</evidence>
<reference key="1">
    <citation type="journal article" date="2014" name="Mol. Biol. Evol.">
        <title>Clawing through evolution: toxin diversification and convergence in the ancient lineage Chilopoda (centipedes).</title>
        <authorList>
            <person name="Undheim E.A."/>
            <person name="Jones A."/>
            <person name="Clauser K.R."/>
            <person name="Holland J.W."/>
            <person name="Pineda S.S."/>
            <person name="King G.F."/>
            <person name="Fry B.G."/>
        </authorList>
    </citation>
    <scope>NUCLEOTIDE SEQUENCE [MRNA]</scope>
    <scope>NOMENCLATURE</scope>
    <source>
        <tissue>Venom gland</tissue>
    </source>
</reference>
<accession>P0DQC8</accession>
<feature type="signal peptide" evidence="1">
    <location>
        <begin position="1"/>
        <end position="26"/>
    </location>
</feature>
<feature type="chain" id="PRO_0000446812" description="U-scoloptoxin(16)-Er5a" evidence="3">
    <location>
        <begin position="27"/>
        <end position="112"/>
    </location>
</feature>
<organism>
    <name type="scientific">Ethmostigmus rubripes</name>
    <name type="common">Giant centipede</name>
    <dbReference type="NCBI Taxonomy" id="62613"/>
    <lineage>
        <taxon>Eukaryota</taxon>
        <taxon>Metazoa</taxon>
        <taxon>Ecdysozoa</taxon>
        <taxon>Arthropoda</taxon>
        <taxon>Myriapoda</taxon>
        <taxon>Chilopoda</taxon>
        <taxon>Pleurostigmophora</taxon>
        <taxon>Scolopendromorpha</taxon>
        <taxon>Scolopendridae</taxon>
        <taxon>Ethmostigmus</taxon>
    </lineage>
</organism>
<protein>
    <recommendedName>
        <fullName evidence="2">U-scoloptoxin(16)-Er5a</fullName>
        <shortName evidence="2">U-SLPTX(16)-Er5a</shortName>
    </recommendedName>
</protein>